<organism>
    <name type="scientific">Streptomyces avermitilis (strain ATCC 31267 / DSM 46492 / JCM 5070 / NBRC 14893 / NCIMB 12804 / NRRL 8165 / MA-4680)</name>
    <dbReference type="NCBI Taxonomy" id="227882"/>
    <lineage>
        <taxon>Bacteria</taxon>
        <taxon>Bacillati</taxon>
        <taxon>Actinomycetota</taxon>
        <taxon>Actinomycetes</taxon>
        <taxon>Kitasatosporales</taxon>
        <taxon>Streptomycetaceae</taxon>
        <taxon>Streptomyces</taxon>
    </lineage>
</organism>
<comment type="function">
    <text evidence="1">Catalyzes the reversible reaction in which hydroxymethyl group from 5,10-methylenetetrahydrofolate is transferred onto alpha-ketoisovalerate to form ketopantoate.</text>
</comment>
<comment type="catalytic activity">
    <reaction evidence="1">
        <text>3-methyl-2-oxobutanoate + (6R)-5,10-methylene-5,6,7,8-tetrahydrofolate + H2O = 2-dehydropantoate + (6S)-5,6,7,8-tetrahydrofolate</text>
        <dbReference type="Rhea" id="RHEA:11824"/>
        <dbReference type="ChEBI" id="CHEBI:11561"/>
        <dbReference type="ChEBI" id="CHEBI:11851"/>
        <dbReference type="ChEBI" id="CHEBI:15377"/>
        <dbReference type="ChEBI" id="CHEBI:15636"/>
        <dbReference type="ChEBI" id="CHEBI:57453"/>
        <dbReference type="EC" id="2.1.2.11"/>
    </reaction>
</comment>
<comment type="cofactor">
    <cofactor evidence="1">
        <name>Mg(2+)</name>
        <dbReference type="ChEBI" id="CHEBI:18420"/>
    </cofactor>
    <text evidence="1">Binds 1 Mg(2+) ion per subunit.</text>
</comment>
<comment type="pathway">
    <text evidence="1">Cofactor biosynthesis; (R)-pantothenate biosynthesis; (R)-pantoate from 3-methyl-2-oxobutanoate: step 1/2.</text>
</comment>
<comment type="subunit">
    <text evidence="1">Homodecamer; pentamer of dimers.</text>
</comment>
<comment type="subcellular location">
    <subcellularLocation>
        <location evidence="1">Cytoplasm</location>
    </subcellularLocation>
</comment>
<comment type="similarity">
    <text evidence="1">Belongs to the PanB family.</text>
</comment>
<proteinExistence type="inferred from homology"/>
<evidence type="ECO:0000255" key="1">
    <source>
        <dbReference type="HAMAP-Rule" id="MF_00156"/>
    </source>
</evidence>
<dbReference type="EC" id="2.1.2.11" evidence="1"/>
<dbReference type="EMBL" id="BA000030">
    <property type="protein sequence ID" value="BAC73655.1"/>
    <property type="molecule type" value="Genomic_DNA"/>
</dbReference>
<dbReference type="RefSeq" id="WP_010987345.1">
    <property type="nucleotide sequence ID" value="NZ_JZJK01000089.1"/>
</dbReference>
<dbReference type="SMR" id="Q82AW2"/>
<dbReference type="GeneID" id="41543023"/>
<dbReference type="KEGG" id="sma:SAVERM_5943"/>
<dbReference type="eggNOG" id="COG0413">
    <property type="taxonomic scope" value="Bacteria"/>
</dbReference>
<dbReference type="HOGENOM" id="CLU_036645_1_0_11"/>
<dbReference type="OrthoDB" id="9781789at2"/>
<dbReference type="UniPathway" id="UPA00028">
    <property type="reaction ID" value="UER00003"/>
</dbReference>
<dbReference type="Proteomes" id="UP000000428">
    <property type="component" value="Chromosome"/>
</dbReference>
<dbReference type="GO" id="GO:0005737">
    <property type="term" value="C:cytoplasm"/>
    <property type="evidence" value="ECO:0007669"/>
    <property type="project" value="UniProtKB-SubCell"/>
</dbReference>
<dbReference type="GO" id="GO:0003864">
    <property type="term" value="F:3-methyl-2-oxobutanoate hydroxymethyltransferase activity"/>
    <property type="evidence" value="ECO:0007669"/>
    <property type="project" value="UniProtKB-UniRule"/>
</dbReference>
<dbReference type="GO" id="GO:0000287">
    <property type="term" value="F:magnesium ion binding"/>
    <property type="evidence" value="ECO:0007669"/>
    <property type="project" value="TreeGrafter"/>
</dbReference>
<dbReference type="GO" id="GO:0015940">
    <property type="term" value="P:pantothenate biosynthetic process"/>
    <property type="evidence" value="ECO:0007669"/>
    <property type="project" value="UniProtKB-UniRule"/>
</dbReference>
<dbReference type="CDD" id="cd06557">
    <property type="entry name" value="KPHMT-like"/>
    <property type="match status" value="1"/>
</dbReference>
<dbReference type="FunFam" id="3.20.20.60:FF:000003">
    <property type="entry name" value="3-methyl-2-oxobutanoate hydroxymethyltransferase"/>
    <property type="match status" value="1"/>
</dbReference>
<dbReference type="Gene3D" id="3.20.20.60">
    <property type="entry name" value="Phosphoenolpyruvate-binding domains"/>
    <property type="match status" value="1"/>
</dbReference>
<dbReference type="HAMAP" id="MF_00156">
    <property type="entry name" value="PanB"/>
    <property type="match status" value="1"/>
</dbReference>
<dbReference type="InterPro" id="IPR003700">
    <property type="entry name" value="Pantoate_hydroxy_MeTrfase"/>
</dbReference>
<dbReference type="InterPro" id="IPR015813">
    <property type="entry name" value="Pyrv/PenolPyrv_kinase-like_dom"/>
</dbReference>
<dbReference type="InterPro" id="IPR040442">
    <property type="entry name" value="Pyrv_kinase-like_dom_sf"/>
</dbReference>
<dbReference type="NCBIfam" id="TIGR00222">
    <property type="entry name" value="panB"/>
    <property type="match status" value="1"/>
</dbReference>
<dbReference type="NCBIfam" id="NF001452">
    <property type="entry name" value="PRK00311.1"/>
    <property type="match status" value="1"/>
</dbReference>
<dbReference type="PANTHER" id="PTHR20881">
    <property type="entry name" value="3-METHYL-2-OXOBUTANOATE HYDROXYMETHYLTRANSFERASE"/>
    <property type="match status" value="1"/>
</dbReference>
<dbReference type="PANTHER" id="PTHR20881:SF0">
    <property type="entry name" value="3-METHYL-2-OXOBUTANOATE HYDROXYMETHYLTRANSFERASE"/>
    <property type="match status" value="1"/>
</dbReference>
<dbReference type="Pfam" id="PF02548">
    <property type="entry name" value="Pantoate_transf"/>
    <property type="match status" value="1"/>
</dbReference>
<dbReference type="PIRSF" id="PIRSF000388">
    <property type="entry name" value="Pantoate_hydroxy_MeTrfase"/>
    <property type="match status" value="1"/>
</dbReference>
<dbReference type="SUPFAM" id="SSF51621">
    <property type="entry name" value="Phosphoenolpyruvate/pyruvate domain"/>
    <property type="match status" value="1"/>
</dbReference>
<protein>
    <recommendedName>
        <fullName evidence="1">3-methyl-2-oxobutanoate hydroxymethyltransferase</fullName>
        <ecNumber evidence="1">2.1.2.11</ecNumber>
    </recommendedName>
    <alternativeName>
        <fullName evidence="1">Ketopantoate hydroxymethyltransferase</fullName>
        <shortName evidence="1">KPHMT</shortName>
    </alternativeName>
</protein>
<reference key="1">
    <citation type="journal article" date="2001" name="Proc. Natl. Acad. Sci. U.S.A.">
        <title>Genome sequence of an industrial microorganism Streptomyces avermitilis: deducing the ability of producing secondary metabolites.</title>
        <authorList>
            <person name="Omura S."/>
            <person name="Ikeda H."/>
            <person name="Ishikawa J."/>
            <person name="Hanamoto A."/>
            <person name="Takahashi C."/>
            <person name="Shinose M."/>
            <person name="Takahashi Y."/>
            <person name="Horikawa H."/>
            <person name="Nakazawa H."/>
            <person name="Osonoe T."/>
            <person name="Kikuchi H."/>
            <person name="Shiba T."/>
            <person name="Sakaki Y."/>
            <person name="Hattori M."/>
        </authorList>
    </citation>
    <scope>NUCLEOTIDE SEQUENCE [LARGE SCALE GENOMIC DNA]</scope>
    <source>
        <strain>ATCC 31267 / DSM 46492 / JCM 5070 / NBRC 14893 / NCIMB 12804 / NRRL 8165 / MA-4680</strain>
    </source>
</reference>
<reference key="2">
    <citation type="journal article" date="2003" name="Nat. Biotechnol.">
        <title>Complete genome sequence and comparative analysis of the industrial microorganism Streptomyces avermitilis.</title>
        <authorList>
            <person name="Ikeda H."/>
            <person name="Ishikawa J."/>
            <person name="Hanamoto A."/>
            <person name="Shinose M."/>
            <person name="Kikuchi H."/>
            <person name="Shiba T."/>
            <person name="Sakaki Y."/>
            <person name="Hattori M."/>
            <person name="Omura S."/>
        </authorList>
    </citation>
    <scope>NUCLEOTIDE SEQUENCE [LARGE SCALE GENOMIC DNA]</scope>
    <source>
        <strain>ATCC 31267 / DSM 46492 / JCM 5070 / NBRC 14893 / NCIMB 12804 / NRRL 8165 / MA-4680</strain>
    </source>
</reference>
<sequence>MTQLSAAQKPSDSSKALYGGKGTRRITIRDITTAKERGEKWPMLTAYDAMTASVFDEAGIPVMLVGDSAGNCHLGYETTVPVTLDEMTMLSAAVVRGTSRALIVGDLPFGSYQEGPVQALRSATRLVKEAGVGAVKLEGGERSHRQIELLVESGIPVMAHIGLTPQSVNAMGYRVQGRGEEAAQQLLRDAKAVQDAGAFAVVLELVPAELAAEVTRVLHIPTVGIGAGPETDAQVLVWTDMLGLTGGKVPKFVKKYADLREVMGNAAKAFAEDVVGGTFPLEEHSVH</sequence>
<feature type="chain" id="PRO_0000184896" description="3-methyl-2-oxobutanoate hydroxymethyltransferase">
    <location>
        <begin position="1"/>
        <end position="287"/>
    </location>
</feature>
<feature type="active site" description="Proton acceptor" evidence="1">
    <location>
        <position position="204"/>
    </location>
</feature>
<feature type="binding site" evidence="1">
    <location>
        <begin position="67"/>
        <end position="68"/>
    </location>
    <ligand>
        <name>3-methyl-2-oxobutanoate</name>
        <dbReference type="ChEBI" id="CHEBI:11851"/>
    </ligand>
</feature>
<feature type="binding site" evidence="1">
    <location>
        <position position="67"/>
    </location>
    <ligand>
        <name>Mg(2+)</name>
        <dbReference type="ChEBI" id="CHEBI:18420"/>
    </ligand>
</feature>
<feature type="binding site" evidence="1">
    <location>
        <position position="106"/>
    </location>
    <ligand>
        <name>3-methyl-2-oxobutanoate</name>
        <dbReference type="ChEBI" id="CHEBI:11851"/>
    </ligand>
</feature>
<feature type="binding site" evidence="1">
    <location>
        <position position="106"/>
    </location>
    <ligand>
        <name>Mg(2+)</name>
        <dbReference type="ChEBI" id="CHEBI:18420"/>
    </ligand>
</feature>
<feature type="binding site" evidence="1">
    <location>
        <position position="136"/>
    </location>
    <ligand>
        <name>3-methyl-2-oxobutanoate</name>
        <dbReference type="ChEBI" id="CHEBI:11851"/>
    </ligand>
</feature>
<feature type="binding site" evidence="1">
    <location>
        <position position="138"/>
    </location>
    <ligand>
        <name>Mg(2+)</name>
        <dbReference type="ChEBI" id="CHEBI:18420"/>
    </ligand>
</feature>
<keyword id="KW-0963">Cytoplasm</keyword>
<keyword id="KW-0460">Magnesium</keyword>
<keyword id="KW-0479">Metal-binding</keyword>
<keyword id="KW-0566">Pantothenate biosynthesis</keyword>
<keyword id="KW-1185">Reference proteome</keyword>
<keyword id="KW-0808">Transferase</keyword>
<name>PANB_STRAW</name>
<gene>
    <name evidence="1" type="primary">panB</name>
    <name type="ordered locus">SAV_5943</name>
</gene>
<accession>Q82AW2</accession>